<keyword id="KW-0006">Acetoin catabolism</keyword>
<keyword id="KW-0963">Cytoplasm</keyword>
<keyword id="KW-1015">Disulfide bond</keyword>
<keyword id="KW-0274">FAD</keyword>
<keyword id="KW-0285">Flavoprotein</keyword>
<keyword id="KW-0520">NAD</keyword>
<keyword id="KW-0560">Oxidoreductase</keyword>
<keyword id="KW-0676">Redox-active center</keyword>
<keyword id="KW-1185">Reference proteome</keyword>
<evidence type="ECO:0000250" key="1"/>
<evidence type="ECO:0000305" key="2"/>
<reference key="1">
    <citation type="journal article" date="1999" name="J. Bacteriol.">
        <title>Biochemical and molecular characterization of the Bacillus subtilis acetoin catabolic pathway.</title>
        <authorList>
            <person name="Huang M."/>
            <person name="Oppermann-Sanio F.B."/>
            <person name="Steinbuechel A."/>
        </authorList>
    </citation>
    <scope>NUCLEOTIDE SEQUENCE [GENOMIC DNA]</scope>
    <source>
        <strain>168 / ATCC 33234 / DSM 402 / NBRC 111470 / NCIMB 10106</strain>
    </source>
</reference>
<reference key="2">
    <citation type="journal article" date="1996" name="Microbiology">
        <title>Cloning and sequencing of a 40.6 kb segment in the 73 degrees-76 degrees region of the Bacillus subtilis chromosome containing genes for trehalose metabolism and acetoin utilization.</title>
        <authorList>
            <person name="Yamamoto H."/>
            <person name="Uchiyama S."/>
            <person name="Sekiguchi J."/>
        </authorList>
    </citation>
    <scope>NUCLEOTIDE SEQUENCE [GENOMIC DNA]</scope>
    <source>
        <strain>168 / AC327</strain>
    </source>
</reference>
<reference key="3">
    <citation type="journal article" date="1997" name="Nature">
        <title>The complete genome sequence of the Gram-positive bacterium Bacillus subtilis.</title>
        <authorList>
            <person name="Kunst F."/>
            <person name="Ogasawara N."/>
            <person name="Moszer I."/>
            <person name="Albertini A.M."/>
            <person name="Alloni G."/>
            <person name="Azevedo V."/>
            <person name="Bertero M.G."/>
            <person name="Bessieres P."/>
            <person name="Bolotin A."/>
            <person name="Borchert S."/>
            <person name="Borriss R."/>
            <person name="Boursier L."/>
            <person name="Brans A."/>
            <person name="Braun M."/>
            <person name="Brignell S.C."/>
            <person name="Bron S."/>
            <person name="Brouillet S."/>
            <person name="Bruschi C.V."/>
            <person name="Caldwell B."/>
            <person name="Capuano V."/>
            <person name="Carter N.M."/>
            <person name="Choi S.-K."/>
            <person name="Codani J.-J."/>
            <person name="Connerton I.F."/>
            <person name="Cummings N.J."/>
            <person name="Daniel R.A."/>
            <person name="Denizot F."/>
            <person name="Devine K.M."/>
            <person name="Duesterhoeft A."/>
            <person name="Ehrlich S.D."/>
            <person name="Emmerson P.T."/>
            <person name="Entian K.-D."/>
            <person name="Errington J."/>
            <person name="Fabret C."/>
            <person name="Ferrari E."/>
            <person name="Foulger D."/>
            <person name="Fritz C."/>
            <person name="Fujita M."/>
            <person name="Fujita Y."/>
            <person name="Fuma S."/>
            <person name="Galizzi A."/>
            <person name="Galleron N."/>
            <person name="Ghim S.-Y."/>
            <person name="Glaser P."/>
            <person name="Goffeau A."/>
            <person name="Golightly E.J."/>
            <person name="Grandi G."/>
            <person name="Guiseppi G."/>
            <person name="Guy B.J."/>
            <person name="Haga K."/>
            <person name="Haiech J."/>
            <person name="Harwood C.R."/>
            <person name="Henaut A."/>
            <person name="Hilbert H."/>
            <person name="Holsappel S."/>
            <person name="Hosono S."/>
            <person name="Hullo M.-F."/>
            <person name="Itaya M."/>
            <person name="Jones L.-M."/>
            <person name="Joris B."/>
            <person name="Karamata D."/>
            <person name="Kasahara Y."/>
            <person name="Klaerr-Blanchard M."/>
            <person name="Klein C."/>
            <person name="Kobayashi Y."/>
            <person name="Koetter P."/>
            <person name="Koningstein G."/>
            <person name="Krogh S."/>
            <person name="Kumano M."/>
            <person name="Kurita K."/>
            <person name="Lapidus A."/>
            <person name="Lardinois S."/>
            <person name="Lauber J."/>
            <person name="Lazarevic V."/>
            <person name="Lee S.-M."/>
            <person name="Levine A."/>
            <person name="Liu H."/>
            <person name="Masuda S."/>
            <person name="Mauel C."/>
            <person name="Medigue C."/>
            <person name="Medina N."/>
            <person name="Mellado R.P."/>
            <person name="Mizuno M."/>
            <person name="Moestl D."/>
            <person name="Nakai S."/>
            <person name="Noback M."/>
            <person name="Noone D."/>
            <person name="O'Reilly M."/>
            <person name="Ogawa K."/>
            <person name="Ogiwara A."/>
            <person name="Oudega B."/>
            <person name="Park S.-H."/>
            <person name="Parro V."/>
            <person name="Pohl T.M."/>
            <person name="Portetelle D."/>
            <person name="Porwollik S."/>
            <person name="Prescott A.M."/>
            <person name="Presecan E."/>
            <person name="Pujic P."/>
            <person name="Purnelle B."/>
            <person name="Rapoport G."/>
            <person name="Rey M."/>
            <person name="Reynolds S."/>
            <person name="Rieger M."/>
            <person name="Rivolta C."/>
            <person name="Rocha E."/>
            <person name="Roche B."/>
            <person name="Rose M."/>
            <person name="Sadaie Y."/>
            <person name="Sato T."/>
            <person name="Scanlan E."/>
            <person name="Schleich S."/>
            <person name="Schroeter R."/>
            <person name="Scoffone F."/>
            <person name="Sekiguchi J."/>
            <person name="Sekowska A."/>
            <person name="Seror S.J."/>
            <person name="Serror P."/>
            <person name="Shin B.-S."/>
            <person name="Soldo B."/>
            <person name="Sorokin A."/>
            <person name="Tacconi E."/>
            <person name="Takagi T."/>
            <person name="Takahashi H."/>
            <person name="Takemaru K."/>
            <person name="Takeuchi M."/>
            <person name="Tamakoshi A."/>
            <person name="Tanaka T."/>
            <person name="Terpstra P."/>
            <person name="Tognoni A."/>
            <person name="Tosato V."/>
            <person name="Uchiyama S."/>
            <person name="Vandenbol M."/>
            <person name="Vannier F."/>
            <person name="Vassarotti A."/>
            <person name="Viari A."/>
            <person name="Wambutt R."/>
            <person name="Wedler E."/>
            <person name="Wedler H."/>
            <person name="Weitzenegger T."/>
            <person name="Winters P."/>
            <person name="Wipat A."/>
            <person name="Yamamoto H."/>
            <person name="Yamane K."/>
            <person name="Yasumoto K."/>
            <person name="Yata K."/>
            <person name="Yoshida K."/>
            <person name="Yoshikawa H.-F."/>
            <person name="Zumstein E."/>
            <person name="Yoshikawa H."/>
            <person name="Danchin A."/>
        </authorList>
    </citation>
    <scope>NUCLEOTIDE SEQUENCE [LARGE SCALE GENOMIC DNA]</scope>
    <source>
        <strain>168</strain>
    </source>
</reference>
<gene>
    <name type="primary">acoL</name>
    <name type="synonym">yfjH</name>
    <name type="ordered locus">BSU08090</name>
</gene>
<protein>
    <recommendedName>
        <fullName>Dihydrolipoyl dehydrogenase</fullName>
        <ecNumber>1.8.1.4</ecNumber>
    </recommendedName>
    <alternativeName>
        <fullName>Dihydrolipoamide dehydrogenase</fullName>
    </alternativeName>
    <alternativeName>
        <fullName>E3 component of acetoin cleaving system</fullName>
    </alternativeName>
</protein>
<dbReference type="EC" id="1.8.1.4"/>
<dbReference type="EMBL" id="AF006075">
    <property type="protein sequence ID" value="AAC05585.1"/>
    <property type="molecule type" value="Genomic_DNA"/>
</dbReference>
<dbReference type="EMBL" id="D78509">
    <property type="protein sequence ID" value="BAA24293.1"/>
    <property type="molecule type" value="Genomic_DNA"/>
</dbReference>
<dbReference type="EMBL" id="AL009126">
    <property type="protein sequence ID" value="CAB12638.1"/>
    <property type="molecule type" value="Genomic_DNA"/>
</dbReference>
<dbReference type="PIR" id="G69581">
    <property type="entry name" value="G69581"/>
</dbReference>
<dbReference type="RefSeq" id="NP_388690.1">
    <property type="nucleotide sequence ID" value="NC_000964.3"/>
</dbReference>
<dbReference type="RefSeq" id="WP_003243007.1">
    <property type="nucleotide sequence ID" value="NZ_OZ025638.1"/>
</dbReference>
<dbReference type="SMR" id="O34324"/>
<dbReference type="FunCoup" id="O34324">
    <property type="interactions" value="308"/>
</dbReference>
<dbReference type="STRING" id="224308.BSU08090"/>
<dbReference type="jPOST" id="O34324"/>
<dbReference type="PaxDb" id="224308-BSU08090"/>
<dbReference type="EnsemblBacteria" id="CAB12638">
    <property type="protein sequence ID" value="CAB12638"/>
    <property type="gene ID" value="BSU_08090"/>
</dbReference>
<dbReference type="GeneID" id="939702"/>
<dbReference type="KEGG" id="bsu:BSU08090"/>
<dbReference type="PATRIC" id="fig|224308.179.peg.875"/>
<dbReference type="eggNOG" id="COG1249">
    <property type="taxonomic scope" value="Bacteria"/>
</dbReference>
<dbReference type="InParanoid" id="O34324"/>
<dbReference type="OrthoDB" id="9800167at2"/>
<dbReference type="PhylomeDB" id="O34324"/>
<dbReference type="BioCyc" id="BSUB:BSU08090-MONOMER"/>
<dbReference type="UniPathway" id="UPA00040"/>
<dbReference type="Proteomes" id="UP000001570">
    <property type="component" value="Chromosome"/>
</dbReference>
<dbReference type="GO" id="GO:0005737">
    <property type="term" value="C:cytoplasm"/>
    <property type="evidence" value="ECO:0007669"/>
    <property type="project" value="UniProtKB-SubCell"/>
</dbReference>
<dbReference type="GO" id="GO:0004148">
    <property type="term" value="F:dihydrolipoyl dehydrogenase (NADH) activity"/>
    <property type="evidence" value="ECO:0000318"/>
    <property type="project" value="GO_Central"/>
</dbReference>
<dbReference type="GO" id="GO:0050660">
    <property type="term" value="F:flavin adenine dinucleotide binding"/>
    <property type="evidence" value="ECO:0000318"/>
    <property type="project" value="GO_Central"/>
</dbReference>
<dbReference type="GO" id="GO:0006103">
    <property type="term" value="P:2-oxoglutarate metabolic process"/>
    <property type="evidence" value="ECO:0000318"/>
    <property type="project" value="GO_Central"/>
</dbReference>
<dbReference type="GO" id="GO:0045150">
    <property type="term" value="P:acetoin catabolic process"/>
    <property type="evidence" value="ECO:0007669"/>
    <property type="project" value="UniProtKB-UniPathway"/>
</dbReference>
<dbReference type="GO" id="GO:0006090">
    <property type="term" value="P:pyruvate metabolic process"/>
    <property type="evidence" value="ECO:0000318"/>
    <property type="project" value="GO_Central"/>
</dbReference>
<dbReference type="FunFam" id="3.30.390.30:FF:000001">
    <property type="entry name" value="Dihydrolipoyl dehydrogenase"/>
    <property type="match status" value="1"/>
</dbReference>
<dbReference type="Gene3D" id="3.30.390.30">
    <property type="match status" value="1"/>
</dbReference>
<dbReference type="Gene3D" id="3.50.50.60">
    <property type="entry name" value="FAD/NAD(P)-binding domain"/>
    <property type="match status" value="2"/>
</dbReference>
<dbReference type="InterPro" id="IPR050151">
    <property type="entry name" value="Class-I_Pyr_Nuc-Dis_Oxidored"/>
</dbReference>
<dbReference type="InterPro" id="IPR036188">
    <property type="entry name" value="FAD/NAD-bd_sf"/>
</dbReference>
<dbReference type="InterPro" id="IPR023753">
    <property type="entry name" value="FAD/NAD-binding_dom"/>
</dbReference>
<dbReference type="InterPro" id="IPR016156">
    <property type="entry name" value="FAD/NAD-linked_Rdtase_dimer_sf"/>
</dbReference>
<dbReference type="InterPro" id="IPR006258">
    <property type="entry name" value="Lipoamide_DH"/>
</dbReference>
<dbReference type="InterPro" id="IPR001100">
    <property type="entry name" value="Pyr_nuc-diS_OxRdtase"/>
</dbReference>
<dbReference type="InterPro" id="IPR004099">
    <property type="entry name" value="Pyr_nucl-diS_OxRdtase_dimer"/>
</dbReference>
<dbReference type="InterPro" id="IPR012999">
    <property type="entry name" value="Pyr_OxRdtase_I_AS"/>
</dbReference>
<dbReference type="NCBIfam" id="TIGR01350">
    <property type="entry name" value="lipoamide_DH"/>
    <property type="match status" value="1"/>
</dbReference>
<dbReference type="PANTHER" id="PTHR22912:SF219">
    <property type="entry name" value="DIHYDROLIPOYL DEHYDROGENASE"/>
    <property type="match status" value="1"/>
</dbReference>
<dbReference type="PANTHER" id="PTHR22912">
    <property type="entry name" value="DISULFIDE OXIDOREDUCTASE"/>
    <property type="match status" value="1"/>
</dbReference>
<dbReference type="Pfam" id="PF07992">
    <property type="entry name" value="Pyr_redox_2"/>
    <property type="match status" value="1"/>
</dbReference>
<dbReference type="Pfam" id="PF02852">
    <property type="entry name" value="Pyr_redox_dim"/>
    <property type="match status" value="1"/>
</dbReference>
<dbReference type="PIRSF" id="PIRSF000350">
    <property type="entry name" value="Mercury_reductase_MerA"/>
    <property type="match status" value="1"/>
</dbReference>
<dbReference type="PRINTS" id="PR00368">
    <property type="entry name" value="FADPNR"/>
</dbReference>
<dbReference type="PRINTS" id="PR00411">
    <property type="entry name" value="PNDRDTASEI"/>
</dbReference>
<dbReference type="SUPFAM" id="SSF51905">
    <property type="entry name" value="FAD/NAD(P)-binding domain"/>
    <property type="match status" value="1"/>
</dbReference>
<dbReference type="SUPFAM" id="SSF55424">
    <property type="entry name" value="FAD/NAD-linked reductases, dimerisation (C-terminal) domain"/>
    <property type="match status" value="1"/>
</dbReference>
<dbReference type="PROSITE" id="PS00076">
    <property type="entry name" value="PYRIDINE_REDOX_1"/>
    <property type="match status" value="1"/>
</dbReference>
<comment type="catalytic activity">
    <reaction>
        <text>N(6)-[(R)-dihydrolipoyl]-L-lysyl-[protein] + NAD(+) = N(6)-[(R)-lipoyl]-L-lysyl-[protein] + NADH + H(+)</text>
        <dbReference type="Rhea" id="RHEA:15045"/>
        <dbReference type="Rhea" id="RHEA-COMP:10474"/>
        <dbReference type="Rhea" id="RHEA-COMP:10475"/>
        <dbReference type="ChEBI" id="CHEBI:15378"/>
        <dbReference type="ChEBI" id="CHEBI:57540"/>
        <dbReference type="ChEBI" id="CHEBI:57945"/>
        <dbReference type="ChEBI" id="CHEBI:83099"/>
        <dbReference type="ChEBI" id="CHEBI:83100"/>
        <dbReference type="EC" id="1.8.1.4"/>
    </reaction>
</comment>
<comment type="cofactor">
    <cofactor evidence="1">
        <name>FAD</name>
        <dbReference type="ChEBI" id="CHEBI:57692"/>
    </cofactor>
    <text evidence="1">Binds 1 FAD per subunit.</text>
</comment>
<comment type="pathway">
    <text>Ketone degradation; acetoin degradation.</text>
</comment>
<comment type="subunit">
    <text evidence="1">Homodimer.</text>
</comment>
<comment type="subcellular location">
    <subcellularLocation>
        <location evidence="2">Cytoplasm</location>
    </subcellularLocation>
</comment>
<comment type="miscellaneous">
    <text>The active site is a redox-active disulfide bond.</text>
</comment>
<comment type="similarity">
    <text evidence="2">Belongs to the class-I pyridine nucleotide-disulfide oxidoreductase family.</text>
</comment>
<organism>
    <name type="scientific">Bacillus subtilis (strain 168)</name>
    <dbReference type="NCBI Taxonomy" id="224308"/>
    <lineage>
        <taxon>Bacteria</taxon>
        <taxon>Bacillati</taxon>
        <taxon>Bacillota</taxon>
        <taxon>Bacilli</taxon>
        <taxon>Bacillales</taxon>
        <taxon>Bacillaceae</taxon>
        <taxon>Bacillus</taxon>
    </lineage>
</organism>
<feature type="chain" id="PRO_0000068018" description="Dihydrolipoyl dehydrogenase">
    <location>
        <begin position="1"/>
        <end position="458"/>
    </location>
</feature>
<feature type="active site" description="Proton acceptor" evidence="1">
    <location>
        <position position="437"/>
    </location>
</feature>
<feature type="binding site" evidence="1">
    <location>
        <begin position="30"/>
        <end position="38"/>
    </location>
    <ligand>
        <name>FAD</name>
        <dbReference type="ChEBI" id="CHEBI:57692"/>
    </ligand>
</feature>
<feature type="binding site" evidence="1">
    <location>
        <position position="47"/>
    </location>
    <ligand>
        <name>FAD</name>
        <dbReference type="ChEBI" id="CHEBI:57692"/>
    </ligand>
</feature>
<feature type="binding site" evidence="1">
    <location>
        <position position="112"/>
    </location>
    <ligand>
        <name>FAD</name>
        <dbReference type="ChEBI" id="CHEBI:57692"/>
    </ligand>
</feature>
<feature type="binding site" evidence="1">
    <location>
        <begin position="177"/>
        <end position="181"/>
    </location>
    <ligand>
        <name>NAD(+)</name>
        <dbReference type="ChEBI" id="CHEBI:57540"/>
    </ligand>
</feature>
<feature type="binding site" evidence="1">
    <location>
        <position position="200"/>
    </location>
    <ligand>
        <name>NAD(+)</name>
        <dbReference type="ChEBI" id="CHEBI:57540"/>
    </ligand>
</feature>
<feature type="binding site" evidence="1">
    <location>
        <begin position="263"/>
        <end position="266"/>
    </location>
    <ligand>
        <name>NAD(+)</name>
        <dbReference type="ChEBI" id="CHEBI:57540"/>
    </ligand>
</feature>
<feature type="binding site" evidence="1">
    <location>
        <position position="305"/>
    </location>
    <ligand>
        <name>FAD</name>
        <dbReference type="ChEBI" id="CHEBI:57692"/>
    </ligand>
</feature>
<feature type="binding site" evidence="1">
    <location>
        <position position="313"/>
    </location>
    <ligand>
        <name>FAD</name>
        <dbReference type="ChEBI" id="CHEBI:57692"/>
    </ligand>
</feature>
<feature type="disulfide bond" description="Redox-active" evidence="1">
    <location>
        <begin position="38"/>
        <end position="43"/>
    </location>
</feature>
<sequence>MTLAIIGGGPAGYAAAVSAAQQGRNVLLIDKGKLGGTCLNEGCIPTKSLLESANVLDKIKHADSFGIELPAGAISVDWSKMQSRKQQVVSQLVQGVQYLMKKNQIQVVKGTASFLSERKLLIEGENGKEIREADQVLIASGSEPIELPFAPFDGEWILDSKDALSLSEIPSSLVIVGGGVIGCEYAGLFARLGSQVTIIETADRLIPAEDEDIARLFQEKLEEDGVEVHTSSRLGRVDQTAKTAIWKSGQREFKTKADYVLVAIGRKPRLDGLQLEQAGVDFSPKGIPVNGHMQTNVPHIYACGDAIGGIQLAHAAFHEGIIAASHASGRDVKINEKHVPRCIYTSPEIACIGMTERQARSIYGDVKIGEFSFSANGKALIKQQAEGKVKIMAEPEFGEIVGVSMIGPDVTELIGQAAAIMNGEMTADMAEHFIAAHPTLSETLHEALLSTIGLAVHA</sequence>
<proteinExistence type="inferred from homology"/>
<name>DLDH3_BACSU</name>
<accession>O34324</accession>